<sequence length="15" mass="1642">VVGGDECNINEHRSL</sequence>
<keyword id="KW-1203">Blood coagulation cascade inhibiting toxin</keyword>
<keyword id="KW-0903">Direct protein sequencing</keyword>
<keyword id="KW-1199">Hemostasis impairing toxin</keyword>
<keyword id="KW-0378">Hydrolase</keyword>
<keyword id="KW-0645">Protease</keyword>
<keyword id="KW-0964">Secreted</keyword>
<keyword id="KW-0720">Serine protease</keyword>
<keyword id="KW-0800">Toxin</keyword>
<accession>P80899</accession>
<comment type="function">
    <text evidence="1">Snake venom serine protease that selectively cleaves the heavy chain of protein C (PROC). This activation is thrombomodulin-independent (By similarity).</text>
</comment>
<comment type="subunit">
    <text evidence="1">Monomer.</text>
</comment>
<comment type="subcellular location">
    <subcellularLocation>
        <location evidence="3">Secreted</location>
    </subcellularLocation>
</comment>
<comment type="tissue specificity">
    <text evidence="3">Expressed by the venom gland.</text>
</comment>
<comment type="similarity">
    <text evidence="2">Belongs to the peptidase S1 family. Snake venom subfamily.</text>
</comment>
<reference key="1">
    <citation type="submission" date="1997-02" db="UniProtKB">
        <authorList>
            <person name="Hong S."/>
        </authorList>
    </citation>
    <scope>PROTEIN SEQUENCE</scope>
    <scope>SUBCELLULAR LOCATION</scope>
    <scope>TISSUE SPECIFICITY</scope>
    <source>
        <tissue>Venom</tissue>
    </source>
</reference>
<feature type="chain" id="PRO_0000088729" description="Protein C activator">
    <location>
        <begin position="1"/>
        <end position="15" status="greater than"/>
    </location>
</feature>
<feature type="domain" description="Peptidase S1" evidence="2">
    <location>
        <begin position="1"/>
        <end position="15" status="greater than"/>
    </location>
</feature>
<feature type="non-terminal residue">
    <location>
        <position position="15"/>
    </location>
</feature>
<protein>
    <recommendedName>
        <fullName>Protein C activator</fullName>
        <ecNumber>3.4.21.-</ecNumber>
    </recommendedName>
    <alternativeName>
        <fullName>Snake venom serine protease</fullName>
        <shortName>SVSP</shortName>
    </alternativeName>
</protein>
<organism>
    <name type="scientific">Gloydius halys</name>
    <name type="common">Chinese water mocassin</name>
    <name type="synonym">Agkistrodon halys</name>
    <dbReference type="NCBI Taxonomy" id="8714"/>
    <lineage>
        <taxon>Eukaryota</taxon>
        <taxon>Metazoa</taxon>
        <taxon>Chordata</taxon>
        <taxon>Craniata</taxon>
        <taxon>Vertebrata</taxon>
        <taxon>Euteleostomi</taxon>
        <taxon>Lepidosauria</taxon>
        <taxon>Squamata</taxon>
        <taxon>Bifurcata</taxon>
        <taxon>Unidentata</taxon>
        <taxon>Episquamata</taxon>
        <taxon>Toxicofera</taxon>
        <taxon>Serpentes</taxon>
        <taxon>Colubroidea</taxon>
        <taxon>Viperidae</taxon>
        <taxon>Crotalinae</taxon>
        <taxon>Gloydius</taxon>
    </lineage>
</organism>
<name>VSPCA_GLOHA</name>
<proteinExistence type="evidence at protein level"/>
<evidence type="ECO:0000250" key="1"/>
<evidence type="ECO:0000255" key="2">
    <source>
        <dbReference type="PROSITE-ProRule" id="PRU00274"/>
    </source>
</evidence>
<evidence type="ECO:0000269" key="3">
    <source ref="1"/>
</evidence>
<dbReference type="EC" id="3.4.21.-"/>
<dbReference type="GO" id="GO:0005576">
    <property type="term" value="C:extracellular region"/>
    <property type="evidence" value="ECO:0007669"/>
    <property type="project" value="UniProtKB-SubCell"/>
</dbReference>
<dbReference type="GO" id="GO:0008236">
    <property type="term" value="F:serine-type peptidase activity"/>
    <property type="evidence" value="ECO:0007669"/>
    <property type="project" value="UniProtKB-KW"/>
</dbReference>
<dbReference type="GO" id="GO:0090729">
    <property type="term" value="F:toxin activity"/>
    <property type="evidence" value="ECO:0007669"/>
    <property type="project" value="UniProtKB-KW"/>
</dbReference>
<dbReference type="GO" id="GO:0006508">
    <property type="term" value="P:proteolysis"/>
    <property type="evidence" value="ECO:0007669"/>
    <property type="project" value="UniProtKB-KW"/>
</dbReference>